<accession>A8ALJ9</accession>
<sequence length="168" mass="18576">MSGILTRWRQLGRRYFWPHLLLGMVAASFGLPALSNAAEPNTPAKATASNHDQSVKVNFSQLALLEASNRRPNFTVDYWHQHAIRTVIRHLSFAMAPQTLPVVEESSPLQAHHIALLNTLSAMLTQEGTPPTIVRRVARAHFTPQASFSVPAWISQAQGIRAGPQRLS</sequence>
<reference key="1">
    <citation type="submission" date="2007-08" db="EMBL/GenBank/DDBJ databases">
        <authorList>
            <consortium name="The Citrobacter koseri Genome Sequencing Project"/>
            <person name="McClelland M."/>
            <person name="Sanderson E.K."/>
            <person name="Porwollik S."/>
            <person name="Spieth J."/>
            <person name="Clifton W.S."/>
            <person name="Latreille P."/>
            <person name="Courtney L."/>
            <person name="Wang C."/>
            <person name="Pepin K."/>
            <person name="Bhonagiri V."/>
            <person name="Nash W."/>
            <person name="Johnson M."/>
            <person name="Thiruvilangam P."/>
            <person name="Wilson R."/>
        </authorList>
    </citation>
    <scope>NUCLEOTIDE SEQUENCE [LARGE SCALE GENOMIC DNA]</scope>
    <source>
        <strain>ATCC BAA-895 / CDC 4225-83 / SGSC4696</strain>
    </source>
</reference>
<comment type="function">
    <text evidence="1">Regulates secA expression by translational coupling of the secM secA operon. Translational pausing at a specific Pro residue 5 residues before the end of the protein may allow disruption of a mRNA repressor helix that normally suppresses secA translation initiation.</text>
</comment>
<comment type="subcellular location">
    <subcellularLocation>
        <location evidence="1">Cytoplasm</location>
        <location evidence="1">Cytosol</location>
    </subcellularLocation>
    <subcellularLocation>
        <location evidence="1">Periplasm</location>
    </subcellularLocation>
    <text evidence="1">The active form is cytosolic, while the periplasmic form is rapidly degraded, mainly by the tail-specific protease.</text>
</comment>
<comment type="similarity">
    <text evidence="1">Belongs to the SecM family.</text>
</comment>
<comment type="sequence caution" evidence="2">
    <conflict type="erroneous initiation">
        <sequence resource="EMBL-CDS" id="ABV14362"/>
    </conflict>
</comment>
<gene>
    <name evidence="1" type="primary">secM</name>
    <name type="ordered locus">CKO_03278</name>
</gene>
<keyword id="KW-0963">Cytoplasm</keyword>
<keyword id="KW-0574">Periplasm</keyword>
<keyword id="KW-1185">Reference proteome</keyword>
<keyword id="KW-0732">Signal</keyword>
<proteinExistence type="inferred from homology"/>
<dbReference type="EMBL" id="CP000822">
    <property type="protein sequence ID" value="ABV14362.1"/>
    <property type="status" value="ALT_INIT"/>
    <property type="molecule type" value="Genomic_DNA"/>
</dbReference>
<dbReference type="RefSeq" id="WP_024130709.1">
    <property type="nucleotide sequence ID" value="NC_009792.1"/>
</dbReference>
<dbReference type="SMR" id="A8ALJ9"/>
<dbReference type="STRING" id="290338.CKO_03278"/>
<dbReference type="GeneID" id="45137051"/>
<dbReference type="KEGG" id="cko:CKO_03278"/>
<dbReference type="HOGENOM" id="CLU_108853_0_0_6"/>
<dbReference type="OrthoDB" id="6495450at2"/>
<dbReference type="Proteomes" id="UP000008148">
    <property type="component" value="Chromosome"/>
</dbReference>
<dbReference type="GO" id="GO:0005829">
    <property type="term" value="C:cytosol"/>
    <property type="evidence" value="ECO:0007669"/>
    <property type="project" value="UniProtKB-SubCell"/>
</dbReference>
<dbReference type="GO" id="GO:0042597">
    <property type="term" value="C:periplasmic space"/>
    <property type="evidence" value="ECO:0007669"/>
    <property type="project" value="UniProtKB-SubCell"/>
</dbReference>
<dbReference type="GO" id="GO:0045182">
    <property type="term" value="F:translation regulator activity"/>
    <property type="evidence" value="ECO:0007669"/>
    <property type="project" value="InterPro"/>
</dbReference>
<dbReference type="HAMAP" id="MF_01332">
    <property type="entry name" value="SecM"/>
    <property type="match status" value="1"/>
</dbReference>
<dbReference type="InterPro" id="IPR009502">
    <property type="entry name" value="SecM"/>
</dbReference>
<dbReference type="NCBIfam" id="NF002799">
    <property type="entry name" value="PRK02943.1-1"/>
    <property type="match status" value="1"/>
</dbReference>
<dbReference type="Pfam" id="PF06558">
    <property type="entry name" value="SecM"/>
    <property type="match status" value="1"/>
</dbReference>
<dbReference type="PIRSF" id="PIRSF004572">
    <property type="entry name" value="SecM"/>
    <property type="match status" value="1"/>
</dbReference>
<name>SECM_CITK8</name>
<protein>
    <recommendedName>
        <fullName evidence="1">Secretion monitor</fullName>
    </recommendedName>
</protein>
<organism>
    <name type="scientific">Citrobacter koseri (strain ATCC BAA-895 / CDC 4225-83 / SGSC4696)</name>
    <dbReference type="NCBI Taxonomy" id="290338"/>
    <lineage>
        <taxon>Bacteria</taxon>
        <taxon>Pseudomonadati</taxon>
        <taxon>Pseudomonadota</taxon>
        <taxon>Gammaproteobacteria</taxon>
        <taxon>Enterobacterales</taxon>
        <taxon>Enterobacteriaceae</taxon>
        <taxon>Citrobacter</taxon>
    </lineage>
</organism>
<evidence type="ECO:0000255" key="1">
    <source>
        <dbReference type="HAMAP-Rule" id="MF_01332"/>
    </source>
</evidence>
<evidence type="ECO:0000305" key="2"/>
<feature type="signal peptide" evidence="1">
    <location>
        <begin position="1"/>
        <end position="37"/>
    </location>
</feature>
<feature type="chain" id="PRO_0000314442" description="Secretion monitor">
    <location>
        <begin position="38"/>
        <end position="168"/>
    </location>
</feature>